<keyword id="KW-0460">Magnesium</keyword>
<keyword id="KW-0464">Manganese</keyword>
<keyword id="KW-0474">Menaquinone biosynthesis</keyword>
<keyword id="KW-0479">Metal-binding</keyword>
<keyword id="KW-1185">Reference proteome</keyword>
<keyword id="KW-0786">Thiamine pyrophosphate</keyword>
<keyword id="KW-0808">Transferase</keyword>
<feature type="chain" id="PRO_0000341791" description="2-succinyl-5-enolpyruvyl-6-hydroxy-3-cyclohexene-1-carboxylate synthase">
    <location>
        <begin position="1"/>
        <end position="537"/>
    </location>
</feature>
<sequence>MTAPEPAPESATATARRILAALVEAGVTEIVVAPGSRNAPLSFAAYDAAAAGLVRLHTRLDERTAGFLALGLTRSGRRAAVVCTSGTAVANLHPAVLEAAHAGVDLVVVSADRPARLRGTGANQTTDQVGIFGPLVPTQDASGPVELLTAGPVHLNVPLEEPLVPDDRWLPDVVPGEPAHRVIPASLTVLARGPRTVVVAGDDAGPRVRVLAEQAGWPLLAEPSSGSRTGDNAIRTYRLLLDGDLGARVERVVVGGHPTLSRPVSRLLARPDVEVVDLGAWGVWSERPFPVHSRILGGVGVDAPVDAADGTADDTDWLEEWRTADRAVSARLDALLAAEPGLTPHEVAGAVARALPAGGLLVVGASSPIRDLDLMVPRYDVGARRKVVANRGLAGIDGTISTAVGAALGRPRSTRALTLMGDVTFLHDAGALVIGPGEAVPDLTIVVVNDDGGSIFAMLEQGAAEYADQYDRLFGTPHRVDLASLCAATRTPHWRVDSLAELEHALASPAGGIEVVEAVVRRDNRRDLDERIRALRP</sequence>
<evidence type="ECO:0000255" key="1">
    <source>
        <dbReference type="HAMAP-Rule" id="MF_01659"/>
    </source>
</evidence>
<reference key="1">
    <citation type="submission" date="2006-12" db="EMBL/GenBank/DDBJ databases">
        <title>Complete sequence of chromosome 1 of Nocardioides sp. JS614.</title>
        <authorList>
            <person name="Copeland A."/>
            <person name="Lucas S."/>
            <person name="Lapidus A."/>
            <person name="Barry K."/>
            <person name="Detter J.C."/>
            <person name="Glavina del Rio T."/>
            <person name="Hammon N."/>
            <person name="Israni S."/>
            <person name="Dalin E."/>
            <person name="Tice H."/>
            <person name="Pitluck S."/>
            <person name="Thompson L.S."/>
            <person name="Brettin T."/>
            <person name="Bruce D."/>
            <person name="Han C."/>
            <person name="Tapia R."/>
            <person name="Schmutz J."/>
            <person name="Larimer F."/>
            <person name="Land M."/>
            <person name="Hauser L."/>
            <person name="Kyrpides N."/>
            <person name="Kim E."/>
            <person name="Mattes T."/>
            <person name="Gossett J."/>
            <person name="Richardson P."/>
        </authorList>
    </citation>
    <scope>NUCLEOTIDE SEQUENCE [LARGE SCALE GENOMIC DNA]</scope>
    <source>
        <strain>ATCC BAA-499 / JS614</strain>
    </source>
</reference>
<gene>
    <name evidence="1" type="primary">menD</name>
    <name type="ordered locus">Noca_0510</name>
</gene>
<protein>
    <recommendedName>
        <fullName evidence="1">2-succinyl-5-enolpyruvyl-6-hydroxy-3-cyclohexene-1-carboxylate synthase</fullName>
        <shortName evidence="1">SEPHCHC synthase</shortName>
        <ecNumber evidence="1">2.2.1.9</ecNumber>
    </recommendedName>
    <alternativeName>
        <fullName evidence="1">Menaquinone biosynthesis protein MenD</fullName>
    </alternativeName>
</protein>
<name>MEND_NOCSJ</name>
<organism>
    <name type="scientific">Nocardioides sp. (strain ATCC BAA-499 / JS614)</name>
    <dbReference type="NCBI Taxonomy" id="196162"/>
    <lineage>
        <taxon>Bacteria</taxon>
        <taxon>Bacillati</taxon>
        <taxon>Actinomycetota</taxon>
        <taxon>Actinomycetes</taxon>
        <taxon>Propionibacteriales</taxon>
        <taxon>Nocardioidaceae</taxon>
        <taxon>Nocardioides</taxon>
    </lineage>
</organism>
<dbReference type="EC" id="2.2.1.9" evidence="1"/>
<dbReference type="EMBL" id="CP000509">
    <property type="protein sequence ID" value="ABL80052.1"/>
    <property type="molecule type" value="Genomic_DNA"/>
</dbReference>
<dbReference type="RefSeq" id="WP_011754002.1">
    <property type="nucleotide sequence ID" value="NC_008699.1"/>
</dbReference>
<dbReference type="SMR" id="A1SE17"/>
<dbReference type="STRING" id="196162.Noca_0510"/>
<dbReference type="KEGG" id="nca:Noca_0510"/>
<dbReference type="eggNOG" id="COG1165">
    <property type="taxonomic scope" value="Bacteria"/>
</dbReference>
<dbReference type="HOGENOM" id="CLU_006051_4_0_11"/>
<dbReference type="OrthoDB" id="9791859at2"/>
<dbReference type="UniPathway" id="UPA00079"/>
<dbReference type="UniPathway" id="UPA01057">
    <property type="reaction ID" value="UER00164"/>
</dbReference>
<dbReference type="Proteomes" id="UP000000640">
    <property type="component" value="Chromosome"/>
</dbReference>
<dbReference type="GO" id="GO:0070204">
    <property type="term" value="F:2-succinyl-5-enolpyruvyl-6-hydroxy-3-cyclohexene-1-carboxylic-acid synthase activity"/>
    <property type="evidence" value="ECO:0007669"/>
    <property type="project" value="UniProtKB-UniRule"/>
</dbReference>
<dbReference type="GO" id="GO:0000287">
    <property type="term" value="F:magnesium ion binding"/>
    <property type="evidence" value="ECO:0007669"/>
    <property type="project" value="UniProtKB-UniRule"/>
</dbReference>
<dbReference type="GO" id="GO:0030145">
    <property type="term" value="F:manganese ion binding"/>
    <property type="evidence" value="ECO:0007669"/>
    <property type="project" value="UniProtKB-UniRule"/>
</dbReference>
<dbReference type="GO" id="GO:0030976">
    <property type="term" value="F:thiamine pyrophosphate binding"/>
    <property type="evidence" value="ECO:0007669"/>
    <property type="project" value="UniProtKB-UniRule"/>
</dbReference>
<dbReference type="GO" id="GO:0009234">
    <property type="term" value="P:menaquinone biosynthetic process"/>
    <property type="evidence" value="ECO:0007669"/>
    <property type="project" value="UniProtKB-UniRule"/>
</dbReference>
<dbReference type="CDD" id="cd07037">
    <property type="entry name" value="TPP_PYR_MenD"/>
    <property type="match status" value="1"/>
</dbReference>
<dbReference type="CDD" id="cd02009">
    <property type="entry name" value="TPP_SHCHC_synthase"/>
    <property type="match status" value="1"/>
</dbReference>
<dbReference type="Gene3D" id="3.40.50.970">
    <property type="match status" value="2"/>
</dbReference>
<dbReference type="Gene3D" id="3.40.50.1220">
    <property type="entry name" value="TPP-binding domain"/>
    <property type="match status" value="1"/>
</dbReference>
<dbReference type="HAMAP" id="MF_01659">
    <property type="entry name" value="MenD"/>
    <property type="match status" value="1"/>
</dbReference>
<dbReference type="InterPro" id="IPR004433">
    <property type="entry name" value="MenaQ_synth_MenD"/>
</dbReference>
<dbReference type="InterPro" id="IPR029061">
    <property type="entry name" value="THDP-binding"/>
</dbReference>
<dbReference type="InterPro" id="IPR012001">
    <property type="entry name" value="Thiamin_PyroP_enz_TPP-bd_dom"/>
</dbReference>
<dbReference type="InterPro" id="IPR011766">
    <property type="entry name" value="TPP_enzyme_TPP-bd"/>
</dbReference>
<dbReference type="NCBIfam" id="TIGR00173">
    <property type="entry name" value="menD"/>
    <property type="match status" value="1"/>
</dbReference>
<dbReference type="PANTHER" id="PTHR42916">
    <property type="entry name" value="2-SUCCINYL-5-ENOLPYRUVYL-6-HYDROXY-3-CYCLOHEXENE-1-CARBOXYLATE SYNTHASE"/>
    <property type="match status" value="1"/>
</dbReference>
<dbReference type="PANTHER" id="PTHR42916:SF1">
    <property type="entry name" value="PROTEIN PHYLLO, CHLOROPLASTIC"/>
    <property type="match status" value="1"/>
</dbReference>
<dbReference type="Pfam" id="PF02775">
    <property type="entry name" value="TPP_enzyme_C"/>
    <property type="match status" value="1"/>
</dbReference>
<dbReference type="Pfam" id="PF02776">
    <property type="entry name" value="TPP_enzyme_N"/>
    <property type="match status" value="1"/>
</dbReference>
<dbReference type="PIRSF" id="PIRSF004983">
    <property type="entry name" value="MenD"/>
    <property type="match status" value="1"/>
</dbReference>
<dbReference type="SUPFAM" id="SSF52518">
    <property type="entry name" value="Thiamin diphosphate-binding fold (THDP-binding)"/>
    <property type="match status" value="2"/>
</dbReference>
<proteinExistence type="inferred from homology"/>
<comment type="function">
    <text evidence="1">Catalyzes the thiamine diphosphate-dependent decarboxylation of 2-oxoglutarate and the subsequent addition of the resulting succinic semialdehyde-thiamine pyrophosphate anion to isochorismate to yield 2-succinyl-5-enolpyruvyl-6-hydroxy-3-cyclohexene-1-carboxylate (SEPHCHC).</text>
</comment>
<comment type="catalytic activity">
    <reaction evidence="1">
        <text>isochorismate + 2-oxoglutarate + H(+) = 5-enolpyruvoyl-6-hydroxy-2-succinyl-cyclohex-3-ene-1-carboxylate + CO2</text>
        <dbReference type="Rhea" id="RHEA:25593"/>
        <dbReference type="ChEBI" id="CHEBI:15378"/>
        <dbReference type="ChEBI" id="CHEBI:16526"/>
        <dbReference type="ChEBI" id="CHEBI:16810"/>
        <dbReference type="ChEBI" id="CHEBI:29780"/>
        <dbReference type="ChEBI" id="CHEBI:58818"/>
        <dbReference type="EC" id="2.2.1.9"/>
    </reaction>
</comment>
<comment type="cofactor">
    <cofactor evidence="1">
        <name>Mg(2+)</name>
        <dbReference type="ChEBI" id="CHEBI:18420"/>
    </cofactor>
    <cofactor evidence="1">
        <name>Mn(2+)</name>
        <dbReference type="ChEBI" id="CHEBI:29035"/>
    </cofactor>
</comment>
<comment type="cofactor">
    <cofactor evidence="1">
        <name>thiamine diphosphate</name>
        <dbReference type="ChEBI" id="CHEBI:58937"/>
    </cofactor>
    <text evidence="1">Binds 1 thiamine pyrophosphate per subunit.</text>
</comment>
<comment type="pathway">
    <text evidence="1">Quinol/quinone metabolism; 1,4-dihydroxy-2-naphthoate biosynthesis; 1,4-dihydroxy-2-naphthoate from chorismate: step 2/7.</text>
</comment>
<comment type="pathway">
    <text evidence="1">Quinol/quinone metabolism; menaquinone biosynthesis.</text>
</comment>
<comment type="subunit">
    <text evidence="1">Homodimer.</text>
</comment>
<comment type="similarity">
    <text evidence="1">Belongs to the TPP enzyme family. MenD subfamily.</text>
</comment>
<accession>A1SE17</accession>